<sequence>MPEAPKIAALEVSDESLAEKNKNKLQFIEDVTTNADDVQRRVLEEILSRNADVEYLKRHGLEGRTDRETFKHIMPVVTYEDIQPEINRIANGDKSQVLCSNPISEFLTSSGTSGGERKLMPTIEEELDRRSLLYSLLMPVMDQFVPGLDKGKGMYFLFIKSESKTPGGLPARPVLTSYYKSSHFKNRPYDPYTNYTSPNQTILCSDSYQSMYSQMLCGLCQHKEVLRVGAVFASGFIRAIKFLEKHWPELARDIRTGTLSSEITDSSVREAVGEILKPDPKLADFVESECRKTSWQGIITRLWPNTKYVDVIVTGTMSQYIPTLDYYSNGLPLVCTMYASSECYFGVNLRPLCKPSEVSYTLIPNMAYFEFLPVHRNSGVTSSISLPKALTEKEQQELVDLVDVKLGQEYELVVTTYAGLYRYRVGDVLSVAGFKNNAPQFSFICRKNVVLSIDSDKTDEVELQNAVKNAVTHLVPFDASLSEYTSYADTSSIPGHYVLFWELCLNGNTPIPPSVFEDCCLTIEESLNSVYRQGRVSDKSIGPLEIKMVESGTFDKLMDYAISLGASINQYKTPRCVKFAPIIELLNSRVVDSYFSPKCPKWSPGHKQWGSN</sequence>
<protein>
    <recommendedName>
        <fullName>Indole-3-acetic acid-amido synthetase GH3.6</fullName>
        <ecNumber>6.3.2.-</ecNumber>
    </recommendedName>
    <alternativeName>
        <fullName>Auxin-responsive GH3-like protein 6</fullName>
        <shortName>AtGH3-6</shortName>
    </alternativeName>
    <alternativeName>
        <fullName>Protein DWARF IN LIGHT 1</fullName>
        <shortName>DFL-1</shortName>
    </alternativeName>
</protein>
<keyword id="KW-0002">3D-structure</keyword>
<keyword id="KW-0436">Ligase</keyword>
<keyword id="KW-1185">Reference proteome</keyword>
<reference key="1">
    <citation type="journal article" date="2001" name="Plant J.">
        <title>DFL1, an auxin-responsive GH3 gene homologue, negatively regulates shoot cell elongation and lateral root formation, and positively regulates the light response of hypocotyl length.</title>
        <authorList>
            <person name="Nakazawa M."/>
            <person name="Yabe N."/>
            <person name="Ichikawa T."/>
            <person name="Yamamoto Y.Y."/>
            <person name="Yoshizumi T."/>
            <person name="Hasunuma K."/>
            <person name="Matsui M."/>
        </authorList>
    </citation>
    <scope>NUCLEOTIDE SEQUENCE [MRNA]</scope>
    <scope>FUNCTION</scope>
    <scope>INDUCTION</scope>
    <source>
        <strain>cv. Landsberg erecta</strain>
    </source>
</reference>
<reference key="2">
    <citation type="submission" date="1999-04" db="EMBL/GenBank/DDBJ databases">
        <title>Structural analysis of Arabidopsis thaliana chromosome 5. XI.</title>
        <authorList>
            <person name="Kaneko T."/>
            <person name="Katoh T."/>
            <person name="Asamizu E."/>
            <person name="Sato S."/>
            <person name="Nakamura Y."/>
            <person name="Kotani H."/>
            <person name="Tabata S."/>
        </authorList>
    </citation>
    <scope>NUCLEOTIDE SEQUENCE [LARGE SCALE GENOMIC DNA]</scope>
    <source>
        <strain>cv. Columbia</strain>
    </source>
</reference>
<reference key="3">
    <citation type="journal article" date="2017" name="Plant J.">
        <title>Araport11: a complete reannotation of the Arabidopsis thaliana reference genome.</title>
        <authorList>
            <person name="Cheng C.Y."/>
            <person name="Krishnakumar V."/>
            <person name="Chan A.P."/>
            <person name="Thibaud-Nissen F."/>
            <person name="Schobel S."/>
            <person name="Town C.D."/>
        </authorList>
    </citation>
    <scope>GENOME REANNOTATION</scope>
    <source>
        <strain>cv. Columbia</strain>
    </source>
</reference>
<reference key="4">
    <citation type="journal article" date="2003" name="Science">
        <title>Empirical analysis of transcriptional activity in the Arabidopsis genome.</title>
        <authorList>
            <person name="Yamada K."/>
            <person name="Lim J."/>
            <person name="Dale J.M."/>
            <person name="Chen H."/>
            <person name="Shinn P."/>
            <person name="Palm C.J."/>
            <person name="Southwick A.M."/>
            <person name="Wu H.C."/>
            <person name="Kim C.J."/>
            <person name="Nguyen M."/>
            <person name="Pham P.K."/>
            <person name="Cheuk R.F."/>
            <person name="Karlin-Newmann G."/>
            <person name="Liu S.X."/>
            <person name="Lam B."/>
            <person name="Sakano H."/>
            <person name="Wu T."/>
            <person name="Yu G."/>
            <person name="Miranda M."/>
            <person name="Quach H.L."/>
            <person name="Tripp M."/>
            <person name="Chang C.H."/>
            <person name="Lee J.M."/>
            <person name="Toriumi M.J."/>
            <person name="Chan M.M."/>
            <person name="Tang C.C."/>
            <person name="Onodera C.S."/>
            <person name="Deng J.M."/>
            <person name="Akiyama K."/>
            <person name="Ansari Y."/>
            <person name="Arakawa T."/>
            <person name="Banh J."/>
            <person name="Banno F."/>
            <person name="Bowser L."/>
            <person name="Brooks S.Y."/>
            <person name="Carninci P."/>
            <person name="Chao Q."/>
            <person name="Choy N."/>
            <person name="Enju A."/>
            <person name="Goldsmith A.D."/>
            <person name="Gurjal M."/>
            <person name="Hansen N.F."/>
            <person name="Hayashizaki Y."/>
            <person name="Johnson-Hopson C."/>
            <person name="Hsuan V.W."/>
            <person name="Iida K."/>
            <person name="Karnes M."/>
            <person name="Khan S."/>
            <person name="Koesema E."/>
            <person name="Ishida J."/>
            <person name="Jiang P.X."/>
            <person name="Jones T."/>
            <person name="Kawai J."/>
            <person name="Kamiya A."/>
            <person name="Meyers C."/>
            <person name="Nakajima M."/>
            <person name="Narusaka M."/>
            <person name="Seki M."/>
            <person name="Sakurai T."/>
            <person name="Satou M."/>
            <person name="Tamse R."/>
            <person name="Vaysberg M."/>
            <person name="Wallender E.K."/>
            <person name="Wong C."/>
            <person name="Yamamura Y."/>
            <person name="Yuan S."/>
            <person name="Shinozaki K."/>
            <person name="Davis R.W."/>
            <person name="Theologis A."/>
            <person name="Ecker J.R."/>
        </authorList>
    </citation>
    <scope>NUCLEOTIDE SEQUENCE [LARGE SCALE MRNA]</scope>
    <source>
        <strain>cv. Columbia</strain>
    </source>
</reference>
<reference key="5">
    <citation type="submission" date="2005-02" db="EMBL/GenBank/DDBJ databases">
        <title>Arabidopsis ORF clones.</title>
        <authorList>
            <person name="Cheuk R.F."/>
            <person name="Chen H."/>
            <person name="Kim C.J."/>
            <person name="Shinn P."/>
            <person name="Ecker J.R."/>
        </authorList>
    </citation>
    <scope>NUCLEOTIDE SEQUENCE [LARGE SCALE MRNA]</scope>
    <source>
        <strain>cv. Columbia</strain>
    </source>
</reference>
<reference key="6">
    <citation type="journal article" date="2005" name="Plant Cell">
        <title>Characterization of an Arabidopsis enzyme family that conjugates amino acids to indole-3-acetic acid.</title>
        <authorList>
            <person name="Staswick P.E."/>
            <person name="Serban B."/>
            <person name="Rowe M."/>
            <person name="Tiryaki I."/>
            <person name="Maldonado M.T."/>
            <person name="Maldonado M.C."/>
            <person name="Suza W."/>
        </authorList>
    </citation>
    <scope>FUNCTION</scope>
    <scope>CHARACTERIZATION</scope>
    <scope>INDUCTION</scope>
</reference>
<reference key="7">
    <citation type="journal article" date="2002" name="Plant Mol. Biol.">
        <title>Auxin-responsive gene expression: genes, promoters and regulatory factors.</title>
        <authorList>
            <person name="Hagen G."/>
            <person name="Guilfoyle T.J."/>
        </authorList>
    </citation>
    <scope>NOMENCLATURE</scope>
</reference>
<gene>
    <name type="primary">GH3.6</name>
    <name type="synonym">DFL1</name>
    <name type="ordered locus">At5g54510</name>
    <name type="ORF">F24B18.13</name>
</gene>
<feature type="chain" id="PRO_0000203575" description="Indole-3-acetic acid-amido synthetase GH3.6">
    <location>
        <begin position="1"/>
        <end position="612"/>
    </location>
</feature>
<feature type="sequence conflict" description="In Ref. 4; AAL47444." evidence="3" ref="4">
    <original>P</original>
    <variation>H</variation>
    <location>
        <position position="604"/>
    </location>
</feature>
<feature type="helix" evidence="4">
    <location>
        <begin position="14"/>
        <end position="33"/>
    </location>
</feature>
<feature type="helix" evidence="4">
    <location>
        <begin position="35"/>
        <end position="49"/>
    </location>
</feature>
<feature type="turn" evidence="4">
    <location>
        <begin position="50"/>
        <end position="52"/>
    </location>
</feature>
<feature type="helix" evidence="4">
    <location>
        <begin position="54"/>
        <end position="58"/>
    </location>
</feature>
<feature type="helix" evidence="4">
    <location>
        <begin position="67"/>
        <end position="73"/>
    </location>
</feature>
<feature type="helix" evidence="4">
    <location>
        <begin position="79"/>
        <end position="90"/>
    </location>
</feature>
<feature type="strand" evidence="4">
    <location>
        <begin position="95"/>
        <end position="98"/>
    </location>
</feature>
<feature type="strand" evidence="4">
    <location>
        <begin position="105"/>
        <end position="113"/>
    </location>
</feature>
<feature type="strand" evidence="4">
    <location>
        <begin position="116"/>
        <end position="122"/>
    </location>
</feature>
<feature type="helix" evidence="4">
    <location>
        <begin position="126"/>
        <end position="135"/>
    </location>
</feature>
<feature type="helix" evidence="4">
    <location>
        <begin position="137"/>
        <end position="144"/>
    </location>
</feature>
<feature type="helix" evidence="4">
    <location>
        <begin position="148"/>
        <end position="150"/>
    </location>
</feature>
<feature type="strand" evidence="4">
    <location>
        <begin position="151"/>
        <end position="155"/>
    </location>
</feature>
<feature type="strand" evidence="4">
    <location>
        <begin position="170"/>
        <end position="172"/>
    </location>
</feature>
<feature type="helix" evidence="4">
    <location>
        <begin position="174"/>
        <end position="180"/>
    </location>
</feature>
<feature type="helix" evidence="4">
    <location>
        <begin position="182"/>
        <end position="185"/>
    </location>
</feature>
<feature type="strand" evidence="4">
    <location>
        <begin position="195"/>
        <end position="197"/>
    </location>
</feature>
<feature type="helix" evidence="4">
    <location>
        <begin position="199"/>
        <end position="202"/>
    </location>
</feature>
<feature type="helix" evidence="4">
    <location>
        <begin position="207"/>
        <end position="220"/>
    </location>
</feature>
<feature type="helix" evidence="4">
    <location>
        <begin position="222"/>
        <end position="224"/>
    </location>
</feature>
<feature type="strand" evidence="4">
    <location>
        <begin position="225"/>
        <end position="232"/>
    </location>
</feature>
<feature type="helix" evidence="4">
    <location>
        <begin position="233"/>
        <end position="256"/>
    </location>
</feature>
<feature type="helix" evidence="4">
    <location>
        <begin position="266"/>
        <end position="275"/>
    </location>
</feature>
<feature type="helix" evidence="4">
    <location>
        <begin position="280"/>
        <end position="291"/>
    </location>
</feature>
<feature type="helix" evidence="4">
    <location>
        <begin position="298"/>
        <end position="302"/>
    </location>
</feature>
<feature type="strand" evidence="4">
    <location>
        <begin position="308"/>
        <end position="312"/>
    </location>
</feature>
<feature type="helix" evidence="4">
    <location>
        <begin position="315"/>
        <end position="320"/>
    </location>
</feature>
<feature type="helix" evidence="4">
    <location>
        <begin position="321"/>
        <end position="328"/>
    </location>
</feature>
<feature type="strand" evidence="4">
    <location>
        <begin position="337"/>
        <end position="340"/>
    </location>
</feature>
<feature type="strand" evidence="4">
    <location>
        <begin position="343"/>
        <end position="347"/>
    </location>
</feature>
<feature type="helix" evidence="4">
    <location>
        <begin position="355"/>
        <end position="357"/>
    </location>
</feature>
<feature type="strand" evidence="4">
    <location>
        <begin position="360"/>
        <end position="362"/>
    </location>
</feature>
<feature type="strand" evidence="4">
    <location>
        <begin position="366"/>
        <end position="373"/>
    </location>
</feature>
<feature type="strand" evidence="4">
    <location>
        <begin position="377"/>
        <end position="380"/>
    </location>
</feature>
<feature type="helix" evidence="4">
    <location>
        <begin position="401"/>
        <end position="403"/>
    </location>
</feature>
<feature type="strand" evidence="4">
    <location>
        <begin position="409"/>
        <end position="415"/>
    </location>
</feature>
<feature type="strand" evidence="4">
    <location>
        <begin position="422"/>
        <end position="435"/>
    </location>
</feature>
<feature type="strand" evidence="4">
    <location>
        <begin position="438"/>
        <end position="446"/>
    </location>
</feature>
<feature type="strand" evidence="4">
    <location>
        <begin position="449"/>
        <end position="451"/>
    </location>
</feature>
<feature type="strand" evidence="4">
    <location>
        <begin position="453"/>
        <end position="455"/>
    </location>
</feature>
<feature type="helix" evidence="4">
    <location>
        <begin position="460"/>
        <end position="470"/>
    </location>
</feature>
<feature type="helix" evidence="4">
    <location>
        <begin position="471"/>
        <end position="477"/>
    </location>
</feature>
<feature type="strand" evidence="4">
    <location>
        <begin position="479"/>
        <end position="489"/>
    </location>
</feature>
<feature type="strand" evidence="4">
    <location>
        <begin position="491"/>
        <end position="494"/>
    </location>
</feature>
<feature type="strand" evidence="4">
    <location>
        <begin position="496"/>
        <end position="505"/>
    </location>
</feature>
<feature type="helix" evidence="4">
    <location>
        <begin position="513"/>
        <end position="526"/>
    </location>
</feature>
<feature type="helix" evidence="4">
    <location>
        <begin position="529"/>
        <end position="536"/>
    </location>
</feature>
<feature type="strand" evidence="4">
    <location>
        <begin position="545"/>
        <end position="549"/>
    </location>
</feature>
<feature type="helix" evidence="4">
    <location>
        <begin position="553"/>
        <end position="563"/>
    </location>
</feature>
<feature type="helix" evidence="4">
    <location>
        <begin position="568"/>
        <end position="570"/>
    </location>
</feature>
<feature type="helix" evidence="4">
    <location>
        <begin position="580"/>
        <end position="588"/>
    </location>
</feature>
<feature type="strand" evidence="4">
    <location>
        <begin position="590"/>
        <end position="595"/>
    </location>
</feature>
<evidence type="ECO:0000269" key="1">
    <source>
    </source>
</evidence>
<evidence type="ECO:0000269" key="2">
    <source>
    </source>
</evidence>
<evidence type="ECO:0000305" key="3"/>
<evidence type="ECO:0007829" key="4">
    <source>
        <dbReference type="PDB" id="7VKA"/>
    </source>
</evidence>
<proteinExistence type="evidence at protein level"/>
<accession>Q9LSQ4</accession>
<accession>Q8VYV6</accession>
<name>GH36_ARATH</name>
<dbReference type="EC" id="6.3.2.-"/>
<dbReference type="EMBL" id="AB050596">
    <property type="protein sequence ID" value="BAB17304.1"/>
    <property type="molecule type" value="mRNA"/>
</dbReference>
<dbReference type="EMBL" id="AB026634">
    <property type="protein sequence ID" value="BAA97524.1"/>
    <property type="molecule type" value="Genomic_DNA"/>
</dbReference>
<dbReference type="EMBL" id="CP002688">
    <property type="protein sequence ID" value="AED96504.1"/>
    <property type="molecule type" value="Genomic_DNA"/>
</dbReference>
<dbReference type="EMBL" id="AY069892">
    <property type="protein sequence ID" value="AAL47444.1"/>
    <property type="molecule type" value="mRNA"/>
</dbReference>
<dbReference type="EMBL" id="BT021108">
    <property type="protein sequence ID" value="AAX12878.1"/>
    <property type="molecule type" value="mRNA"/>
</dbReference>
<dbReference type="RefSeq" id="NP_200262.1">
    <property type="nucleotide sequence ID" value="NM_124831.3"/>
</dbReference>
<dbReference type="PDB" id="7VKA">
    <property type="method" value="X-ray"/>
    <property type="resolution" value="2.40 A"/>
    <property type="chains" value="A/B=1-612"/>
</dbReference>
<dbReference type="PDBsum" id="7VKA"/>
<dbReference type="SMR" id="Q9LSQ4"/>
<dbReference type="BioGRID" id="20783">
    <property type="interactions" value="1"/>
</dbReference>
<dbReference type="FunCoup" id="Q9LSQ4">
    <property type="interactions" value="1227"/>
</dbReference>
<dbReference type="IntAct" id="Q9LSQ4">
    <property type="interactions" value="1"/>
</dbReference>
<dbReference type="STRING" id="3702.Q9LSQ4"/>
<dbReference type="iPTMnet" id="Q9LSQ4"/>
<dbReference type="PaxDb" id="3702-AT5G54510.1"/>
<dbReference type="ProteomicsDB" id="221847"/>
<dbReference type="EnsemblPlants" id="AT5G54510.1">
    <property type="protein sequence ID" value="AT5G54510.1"/>
    <property type="gene ID" value="AT5G54510"/>
</dbReference>
<dbReference type="GeneID" id="835539"/>
<dbReference type="Gramene" id="AT5G54510.1">
    <property type="protein sequence ID" value="AT5G54510.1"/>
    <property type="gene ID" value="AT5G54510"/>
</dbReference>
<dbReference type="KEGG" id="ath:AT5G54510"/>
<dbReference type="Araport" id="AT5G54510"/>
<dbReference type="TAIR" id="AT5G54510">
    <property type="gene designation" value="DFL1"/>
</dbReference>
<dbReference type="eggNOG" id="ENOG502QQAN">
    <property type="taxonomic scope" value="Eukaryota"/>
</dbReference>
<dbReference type="HOGENOM" id="CLU_016249_2_1_1"/>
<dbReference type="InParanoid" id="Q9LSQ4"/>
<dbReference type="OMA" id="YIRTTGT"/>
<dbReference type="OrthoDB" id="10004661at2759"/>
<dbReference type="PhylomeDB" id="Q9LSQ4"/>
<dbReference type="BioCyc" id="ARA:AT5G54510-MONOMER"/>
<dbReference type="BioCyc" id="MetaCyc:AT5G54510-MONOMER"/>
<dbReference type="PRO" id="PR:Q9LSQ4"/>
<dbReference type="Proteomes" id="UP000006548">
    <property type="component" value="Chromosome 5"/>
</dbReference>
<dbReference type="ExpressionAtlas" id="Q9LSQ4">
    <property type="expression patterns" value="baseline and differential"/>
</dbReference>
<dbReference type="GO" id="GO:0005737">
    <property type="term" value="C:cytoplasm"/>
    <property type="evidence" value="ECO:0000250"/>
    <property type="project" value="TAIR"/>
</dbReference>
<dbReference type="GO" id="GO:0010279">
    <property type="term" value="F:indole-3-acetic acid amido synthetase activity"/>
    <property type="evidence" value="ECO:0000314"/>
    <property type="project" value="TAIR"/>
</dbReference>
<dbReference type="GO" id="GO:0009734">
    <property type="term" value="P:auxin-activated signaling pathway"/>
    <property type="evidence" value="ECO:0000315"/>
    <property type="project" value="TAIR"/>
</dbReference>
<dbReference type="GO" id="GO:0009733">
    <property type="term" value="P:response to auxin"/>
    <property type="evidence" value="ECO:0000315"/>
    <property type="project" value="TAIR"/>
</dbReference>
<dbReference type="GO" id="GO:0009826">
    <property type="term" value="P:unidimensional cell growth"/>
    <property type="evidence" value="ECO:0000315"/>
    <property type="project" value="TAIR"/>
</dbReference>
<dbReference type="InterPro" id="IPR004993">
    <property type="entry name" value="GH3"/>
</dbReference>
<dbReference type="InterPro" id="IPR055378">
    <property type="entry name" value="GH3_C"/>
</dbReference>
<dbReference type="InterPro" id="IPR055377">
    <property type="entry name" value="GH3_M"/>
</dbReference>
<dbReference type="PANTHER" id="PTHR31901">
    <property type="entry name" value="GH3 DOMAIN-CONTAINING PROTEIN"/>
    <property type="match status" value="1"/>
</dbReference>
<dbReference type="PANTHER" id="PTHR31901:SF9">
    <property type="entry name" value="GH3 DOMAIN-CONTAINING PROTEIN"/>
    <property type="match status" value="1"/>
</dbReference>
<dbReference type="Pfam" id="PF03321">
    <property type="entry name" value="GH3"/>
    <property type="match status" value="1"/>
</dbReference>
<dbReference type="Pfam" id="PF23572">
    <property type="entry name" value="GH3_C"/>
    <property type="match status" value="1"/>
</dbReference>
<dbReference type="Pfam" id="PF23571">
    <property type="entry name" value="GH3_M"/>
    <property type="match status" value="1"/>
</dbReference>
<organism>
    <name type="scientific">Arabidopsis thaliana</name>
    <name type="common">Mouse-ear cress</name>
    <dbReference type="NCBI Taxonomy" id="3702"/>
    <lineage>
        <taxon>Eukaryota</taxon>
        <taxon>Viridiplantae</taxon>
        <taxon>Streptophyta</taxon>
        <taxon>Embryophyta</taxon>
        <taxon>Tracheophyta</taxon>
        <taxon>Spermatophyta</taxon>
        <taxon>Magnoliopsida</taxon>
        <taxon>eudicotyledons</taxon>
        <taxon>Gunneridae</taxon>
        <taxon>Pentapetalae</taxon>
        <taxon>rosids</taxon>
        <taxon>malvids</taxon>
        <taxon>Brassicales</taxon>
        <taxon>Brassicaceae</taxon>
        <taxon>Camelineae</taxon>
        <taxon>Arabidopsis</taxon>
    </lineage>
</organism>
<comment type="function">
    <text evidence="1 2">Catalyzes the synthesis of indole-3-acetic acid (IAA)-amino acid conjugates, providing a mechanism for the plant to cope with the presence of excess auxin. Strongly reactive with Glu, Gln, Trp, Asp, Ala, Leu, Phe, Gly, Tyr, Met, Ile and Val. Little or no product formation with His, Ser, Thr, Arg, Lys, or Cys. Also active on pyruvic and butyric acid analogs of IAA, PAA and the synthetic auxin naphthaleneacetic acid (NAA). The two chlorinated synthetic auxin herbicides 2,4-D and 3,6-dichloro-o-anisic acid (dicamba) cannot be used as substrates (PubMed:15659623). Involved in auxin signal transduction. Inhibits shoot and hypocotyl cell elongation, and lateral root cell differentiation in light (PubMed:11169197).</text>
</comment>
<comment type="biophysicochemical properties">
    <kinetics>
        <Vmax>244.0 nmol/min/mg enzyme with Asp as substrate (at pH 9.0)</Vmax>
    </kinetics>
    <phDependence>
        <text>Optimum pH is 9.0. No activity at or below pH 7.5.</text>
    </phDependence>
</comment>
<comment type="tissue specificity">
    <text>Expressed in cotyledons, stipules, true leaves, hypocotyls, and all parts of the roots. Not detected in flowers.</text>
</comment>
<comment type="induction">
    <text evidence="1 2">By auxin. Not regulated by light.</text>
</comment>
<comment type="miscellaneous">
    <text evidence="1">The gain-of-function mutant dfl1-D (T-DNA tagging) has a short hypocotyl under blue, red and far-red light, but not in darkness, shows an exaggerated dwarf phenotype in the adult plant caused by the inhibition of cell elongation in shoots, and inhibition of the lateral root growth without any reduction of primary root length.</text>
</comment>
<comment type="similarity">
    <text evidence="3">Belongs to the IAA-amido conjugating enzyme family.</text>
</comment>